<comment type="function">
    <text evidence="1">ATP-binding (A) component of a common energy-coupling factor (ECF) ABC-transporter complex. Unlike classic ABC transporters this ECF transporter provides the energy necessary to transport a number of different substrates.</text>
</comment>
<comment type="subunit">
    <text evidence="1">Forms a stable energy-coupling factor (ECF) transporter complex composed of 2 membrane-embedded substrate-binding proteins (S component), 2 ATP-binding proteins (A component) and 2 transmembrane proteins (T component).</text>
</comment>
<comment type="subcellular location">
    <subcellularLocation>
        <location evidence="1">Cell membrane</location>
        <topology evidence="1">Peripheral membrane protein</topology>
    </subcellularLocation>
</comment>
<comment type="similarity">
    <text evidence="1">Belongs to the ABC transporter superfamily. Energy-coupling factor EcfA family.</text>
</comment>
<protein>
    <recommendedName>
        <fullName evidence="1">Energy-coupling factor transporter ATP-binding protein EcfA1</fullName>
        <shortName evidence="1">ECF transporter A component EcfA1</shortName>
        <ecNumber evidence="1">7.-.-.-</ecNumber>
    </recommendedName>
</protein>
<feature type="chain" id="PRO_0000092072" description="Energy-coupling factor transporter ATP-binding protein EcfA1">
    <location>
        <begin position="1"/>
        <end position="269"/>
    </location>
</feature>
<feature type="domain" description="ABC transporter" evidence="1">
    <location>
        <begin position="8"/>
        <end position="242"/>
    </location>
</feature>
<feature type="binding site" evidence="1">
    <location>
        <begin position="42"/>
        <end position="49"/>
    </location>
    <ligand>
        <name>ATP</name>
        <dbReference type="ChEBI" id="CHEBI:30616"/>
    </ligand>
</feature>
<dbReference type="EC" id="7.-.-.-" evidence="1"/>
<dbReference type="EMBL" id="BX571856">
    <property type="protein sequence ID" value="CAG41286.1"/>
    <property type="molecule type" value="Genomic_DNA"/>
</dbReference>
<dbReference type="RefSeq" id="WP_000389651.1">
    <property type="nucleotide sequence ID" value="NC_002952.2"/>
</dbReference>
<dbReference type="SMR" id="Q6GEL3"/>
<dbReference type="KEGG" id="sar:SAR2305"/>
<dbReference type="HOGENOM" id="CLU_000604_1_22_9"/>
<dbReference type="Proteomes" id="UP000000596">
    <property type="component" value="Chromosome"/>
</dbReference>
<dbReference type="GO" id="GO:0043190">
    <property type="term" value="C:ATP-binding cassette (ABC) transporter complex"/>
    <property type="evidence" value="ECO:0007669"/>
    <property type="project" value="TreeGrafter"/>
</dbReference>
<dbReference type="GO" id="GO:0005524">
    <property type="term" value="F:ATP binding"/>
    <property type="evidence" value="ECO:0007669"/>
    <property type="project" value="UniProtKB-KW"/>
</dbReference>
<dbReference type="GO" id="GO:0016887">
    <property type="term" value="F:ATP hydrolysis activity"/>
    <property type="evidence" value="ECO:0007669"/>
    <property type="project" value="InterPro"/>
</dbReference>
<dbReference type="GO" id="GO:0042626">
    <property type="term" value="F:ATPase-coupled transmembrane transporter activity"/>
    <property type="evidence" value="ECO:0007669"/>
    <property type="project" value="TreeGrafter"/>
</dbReference>
<dbReference type="CDD" id="cd03225">
    <property type="entry name" value="ABC_cobalt_CbiO_domain1"/>
    <property type="match status" value="1"/>
</dbReference>
<dbReference type="FunFam" id="3.40.50.300:FF:000224">
    <property type="entry name" value="Energy-coupling factor transporter ATP-binding protein EcfA"/>
    <property type="match status" value="1"/>
</dbReference>
<dbReference type="Gene3D" id="3.40.50.300">
    <property type="entry name" value="P-loop containing nucleotide triphosphate hydrolases"/>
    <property type="match status" value="1"/>
</dbReference>
<dbReference type="InterPro" id="IPR003593">
    <property type="entry name" value="AAA+_ATPase"/>
</dbReference>
<dbReference type="InterPro" id="IPR003439">
    <property type="entry name" value="ABC_transporter-like_ATP-bd"/>
</dbReference>
<dbReference type="InterPro" id="IPR017871">
    <property type="entry name" value="ABC_transporter-like_CS"/>
</dbReference>
<dbReference type="InterPro" id="IPR015856">
    <property type="entry name" value="ABC_transpr_CbiO/EcfA_su"/>
</dbReference>
<dbReference type="InterPro" id="IPR050095">
    <property type="entry name" value="ECF_ABC_transporter_ATP-bd"/>
</dbReference>
<dbReference type="InterPro" id="IPR030947">
    <property type="entry name" value="EcfA_1"/>
</dbReference>
<dbReference type="InterPro" id="IPR027417">
    <property type="entry name" value="P-loop_NTPase"/>
</dbReference>
<dbReference type="NCBIfam" id="TIGR04520">
    <property type="entry name" value="ECF_ATPase_1"/>
    <property type="match status" value="1"/>
</dbReference>
<dbReference type="NCBIfam" id="NF010167">
    <property type="entry name" value="PRK13648.1"/>
    <property type="match status" value="1"/>
</dbReference>
<dbReference type="PANTHER" id="PTHR43553:SF24">
    <property type="entry name" value="ENERGY-COUPLING FACTOR TRANSPORTER ATP-BINDING PROTEIN ECFA1"/>
    <property type="match status" value="1"/>
</dbReference>
<dbReference type="PANTHER" id="PTHR43553">
    <property type="entry name" value="HEAVY METAL TRANSPORTER"/>
    <property type="match status" value="1"/>
</dbReference>
<dbReference type="Pfam" id="PF00005">
    <property type="entry name" value="ABC_tran"/>
    <property type="match status" value="1"/>
</dbReference>
<dbReference type="SMART" id="SM00382">
    <property type="entry name" value="AAA"/>
    <property type="match status" value="1"/>
</dbReference>
<dbReference type="SUPFAM" id="SSF52540">
    <property type="entry name" value="P-loop containing nucleoside triphosphate hydrolases"/>
    <property type="match status" value="1"/>
</dbReference>
<dbReference type="PROSITE" id="PS00211">
    <property type="entry name" value="ABC_TRANSPORTER_1"/>
    <property type="match status" value="1"/>
</dbReference>
<dbReference type="PROSITE" id="PS50893">
    <property type="entry name" value="ABC_TRANSPORTER_2"/>
    <property type="match status" value="1"/>
</dbReference>
<dbReference type="PROSITE" id="PS51246">
    <property type="entry name" value="CBIO"/>
    <property type="match status" value="1"/>
</dbReference>
<reference key="1">
    <citation type="journal article" date="2004" name="Proc. Natl. Acad. Sci. U.S.A.">
        <title>Complete genomes of two clinical Staphylococcus aureus strains: evidence for the rapid evolution of virulence and drug resistance.</title>
        <authorList>
            <person name="Holden M.T.G."/>
            <person name="Feil E.J."/>
            <person name="Lindsay J.A."/>
            <person name="Peacock S.J."/>
            <person name="Day N.P.J."/>
            <person name="Enright M.C."/>
            <person name="Foster T.J."/>
            <person name="Moore C.E."/>
            <person name="Hurst L."/>
            <person name="Atkin R."/>
            <person name="Barron A."/>
            <person name="Bason N."/>
            <person name="Bentley S.D."/>
            <person name="Chillingworth C."/>
            <person name="Chillingworth T."/>
            <person name="Churcher C."/>
            <person name="Clark L."/>
            <person name="Corton C."/>
            <person name="Cronin A."/>
            <person name="Doggett J."/>
            <person name="Dowd L."/>
            <person name="Feltwell T."/>
            <person name="Hance Z."/>
            <person name="Harris B."/>
            <person name="Hauser H."/>
            <person name="Holroyd S."/>
            <person name="Jagels K."/>
            <person name="James K.D."/>
            <person name="Lennard N."/>
            <person name="Line A."/>
            <person name="Mayes R."/>
            <person name="Moule S."/>
            <person name="Mungall K."/>
            <person name="Ormond D."/>
            <person name="Quail M.A."/>
            <person name="Rabbinowitsch E."/>
            <person name="Rutherford K.M."/>
            <person name="Sanders M."/>
            <person name="Sharp S."/>
            <person name="Simmonds M."/>
            <person name="Stevens K."/>
            <person name="Whitehead S."/>
            <person name="Barrell B.G."/>
            <person name="Spratt B.G."/>
            <person name="Parkhill J."/>
        </authorList>
    </citation>
    <scope>NUCLEOTIDE SEQUENCE [LARGE SCALE GENOMIC DNA]</scope>
    <source>
        <strain>MRSA252</strain>
    </source>
</reference>
<accession>Q6GEL3</accession>
<proteinExistence type="inferred from homology"/>
<name>ECFA1_STAAR</name>
<gene>
    <name evidence="1" type="primary">ecfA1</name>
    <name type="synonym">cbiO1</name>
    <name type="ordered locus">SAR2305</name>
</gene>
<sequence length="269" mass="29993">MEDKNSVIVFKNVSFQYQSDASFTLKDVSFNIPKGQWTSIVGHNGSGKSTIAKLMIGIEKVKSGEIFYNNQAITDDNFEKLRKDIGIVFQNPDNQFVGSIVKYDVAFGLENHAVPHDEMHRRVSEALEQVDMLERADYEPNALSGGQKQRVAIASVLALNPSVIILDEATSMLDPDARQNLLDLVRKVKSEHNITIISITHDLSEAMEADHVIVMNKGTVYKEGTATEIFDHAEELTTIGLDLPFPIKINQMLGHQTSFLTYEGLVDQL</sequence>
<organism>
    <name type="scientific">Staphylococcus aureus (strain MRSA252)</name>
    <dbReference type="NCBI Taxonomy" id="282458"/>
    <lineage>
        <taxon>Bacteria</taxon>
        <taxon>Bacillati</taxon>
        <taxon>Bacillota</taxon>
        <taxon>Bacilli</taxon>
        <taxon>Bacillales</taxon>
        <taxon>Staphylococcaceae</taxon>
        <taxon>Staphylococcus</taxon>
    </lineage>
</organism>
<keyword id="KW-0067">ATP-binding</keyword>
<keyword id="KW-1003">Cell membrane</keyword>
<keyword id="KW-0472">Membrane</keyword>
<keyword id="KW-0547">Nucleotide-binding</keyword>
<keyword id="KW-1278">Translocase</keyword>
<keyword id="KW-0813">Transport</keyword>
<evidence type="ECO:0000255" key="1">
    <source>
        <dbReference type="HAMAP-Rule" id="MF_01710"/>
    </source>
</evidence>